<sequence length="493" mass="52807">MSNWDTKFLKKGYTFDDVLLIPAESHVLPNEVDLKTKLADNLTLNIPIITAAMDTVTGSKMAIAIARAGGLGVIHKNMSITEQAEEVRKVKRSENGVIIDPFFLTPEHKVSEAEELMQRYRISGVPIVETLANRKLVGIITNRDMRFISDYNAPISEHMTSEHLVTAAVGTDLETAERILHEHRIEKLPLVDNSGRLSGLITIKDIEKVIEFPHAAKDEFGRLLVAAAVGVTSDTFERAEALFEAGADAIVIDTAHGHSAGVLRKIAEIRAHFPNRTLIAGNIATAEGARALYDAGVDVVKVGIGPGSICTTRVVAGVGVPQVTAIYDAAAVAREYGKTIIADGGIKYSGDIVKALAAGGNAVMLGSMFAGTDEAPGETEIYQGRKFKTYRGMGSIAAMKKGSSDRYFQGSVNEANKLVPEGIEGRVAYKGAASDIVFQMLGGIRSGMGYVGAGDIQELHENAQFVEMSGAGLIESHPHDVQITNEAPNYSVH</sequence>
<comment type="function">
    <text evidence="2">Catalyzes the conversion of inosine 5'-phosphate (IMP) to xanthosine 5'-phosphate (XMP), the first committed and rate-limiting step in the de novo synthesis of guanine nucleotides, and therefore plays an important role in the regulation of cell growth.</text>
</comment>
<comment type="catalytic activity">
    <reaction evidence="2">
        <text>IMP + NAD(+) + H2O = XMP + NADH + H(+)</text>
        <dbReference type="Rhea" id="RHEA:11708"/>
        <dbReference type="ChEBI" id="CHEBI:15377"/>
        <dbReference type="ChEBI" id="CHEBI:15378"/>
        <dbReference type="ChEBI" id="CHEBI:57464"/>
        <dbReference type="ChEBI" id="CHEBI:57540"/>
        <dbReference type="ChEBI" id="CHEBI:57945"/>
        <dbReference type="ChEBI" id="CHEBI:58053"/>
        <dbReference type="EC" id="1.1.1.205"/>
    </reaction>
</comment>
<comment type="cofactor">
    <cofactor evidence="2">
        <name>K(+)</name>
        <dbReference type="ChEBI" id="CHEBI:29103"/>
    </cofactor>
</comment>
<comment type="activity regulation">
    <text evidence="2">Mycophenolic acid (MPA) is a non-competitive inhibitor that prevents formation of the closed enzyme conformation by binding to the same site as the amobile flap. In contrast, mizoribine monophosphate (MZP) is a competitive inhibitor that induces the closed conformation. MPA is a potent inhibitor of mammalian IMPDHs but a poor inhibitor of the bacterial enzymes. MZP is a more potent inhibitor of bacterial IMPDH.</text>
</comment>
<comment type="pathway">
    <text evidence="2">Purine metabolism; XMP biosynthesis via de novo pathway; XMP from IMP: step 1/1.</text>
</comment>
<comment type="subunit">
    <text evidence="2">Homotetramer.</text>
</comment>
<comment type="similarity">
    <text evidence="2">Belongs to the IMPDH/GMPR family.</text>
</comment>
<accession>P68839</accession>
<accession>P50099</accession>
<reference key="1">
    <citation type="journal article" date="2002" name="Proc. Natl. Acad. Sci. U.S.A.">
        <title>Genome sequence and comparative microarray analysis of serotype M18 group A Streptococcus strains associated with acute rheumatic fever outbreaks.</title>
        <authorList>
            <person name="Smoot J.C."/>
            <person name="Barbian K.D."/>
            <person name="Van Gompel J.J."/>
            <person name="Smoot L.M."/>
            <person name="Chaussee M.S."/>
            <person name="Sylva G.L."/>
            <person name="Sturdevant D.E."/>
            <person name="Ricklefs S.M."/>
            <person name="Porcella S.F."/>
            <person name="Parkins L.D."/>
            <person name="Beres S.B."/>
            <person name="Campbell D.S."/>
            <person name="Smith T.M."/>
            <person name="Zhang Q."/>
            <person name="Kapur V."/>
            <person name="Daly J.A."/>
            <person name="Veasy L.G."/>
            <person name="Musser J.M."/>
        </authorList>
    </citation>
    <scope>NUCLEOTIDE SEQUENCE [LARGE SCALE GENOMIC DNA]</scope>
    <source>
        <strain>MGAS8232</strain>
    </source>
</reference>
<gene>
    <name evidence="2" type="primary">guaB</name>
    <name type="synonym">impD</name>
    <name type="ordered locus">spyM18_2244</name>
</gene>
<proteinExistence type="inferred from homology"/>
<protein>
    <recommendedName>
        <fullName evidence="2">Inosine-5'-monophosphate dehydrogenase</fullName>
        <shortName evidence="2">IMP dehydrogenase</shortName>
        <shortName evidence="2">IMPD</shortName>
        <shortName evidence="2">IMPDH</shortName>
        <ecNumber evidence="2">1.1.1.205</ecNumber>
    </recommendedName>
</protein>
<feature type="initiator methionine" description="Removed" evidence="1">
    <location>
        <position position="1"/>
    </location>
</feature>
<feature type="chain" id="PRO_0000093718" description="Inosine-5'-monophosphate dehydrogenase">
    <location>
        <begin position="2"/>
        <end position="493"/>
    </location>
</feature>
<feature type="domain" description="CBS 1" evidence="2">
    <location>
        <begin position="97"/>
        <end position="155"/>
    </location>
</feature>
<feature type="domain" description="CBS 2" evidence="2">
    <location>
        <begin position="159"/>
        <end position="219"/>
    </location>
</feature>
<feature type="active site" description="Thioimidate intermediate" evidence="2">
    <location>
        <position position="310"/>
    </location>
</feature>
<feature type="active site" description="Proton acceptor" evidence="2">
    <location>
        <position position="406"/>
    </location>
</feature>
<feature type="binding site" evidence="2">
    <location>
        <position position="253"/>
    </location>
    <ligand>
        <name>NAD(+)</name>
        <dbReference type="ChEBI" id="CHEBI:57540"/>
    </ligand>
</feature>
<feature type="binding site" evidence="2">
    <location>
        <begin position="303"/>
        <end position="305"/>
    </location>
    <ligand>
        <name>NAD(+)</name>
        <dbReference type="ChEBI" id="CHEBI:57540"/>
    </ligand>
</feature>
<feature type="binding site" description="in other chain" evidence="2">
    <location>
        <position position="305"/>
    </location>
    <ligand>
        <name>K(+)</name>
        <dbReference type="ChEBI" id="CHEBI:29103"/>
        <note>ligand shared between two tetrameric partners</note>
    </ligand>
</feature>
<feature type="binding site" description="in other chain" evidence="2">
    <location>
        <position position="307"/>
    </location>
    <ligand>
        <name>K(+)</name>
        <dbReference type="ChEBI" id="CHEBI:29103"/>
        <note>ligand shared between two tetrameric partners</note>
    </ligand>
</feature>
<feature type="binding site" evidence="2">
    <location>
        <position position="308"/>
    </location>
    <ligand>
        <name>IMP</name>
        <dbReference type="ChEBI" id="CHEBI:58053"/>
    </ligand>
</feature>
<feature type="binding site" description="in other chain" evidence="2">
    <location>
        <position position="310"/>
    </location>
    <ligand>
        <name>K(+)</name>
        <dbReference type="ChEBI" id="CHEBI:29103"/>
        <note>ligand shared between two tetrameric partners</note>
    </ligand>
</feature>
<feature type="binding site" evidence="2">
    <location>
        <begin position="343"/>
        <end position="345"/>
    </location>
    <ligand>
        <name>IMP</name>
        <dbReference type="ChEBI" id="CHEBI:58053"/>
    </ligand>
</feature>
<feature type="binding site" evidence="2">
    <location>
        <begin position="366"/>
        <end position="367"/>
    </location>
    <ligand>
        <name>IMP</name>
        <dbReference type="ChEBI" id="CHEBI:58053"/>
    </ligand>
</feature>
<feature type="binding site" evidence="2">
    <location>
        <begin position="390"/>
        <end position="394"/>
    </location>
    <ligand>
        <name>IMP</name>
        <dbReference type="ChEBI" id="CHEBI:58053"/>
    </ligand>
</feature>
<feature type="binding site" evidence="2">
    <location>
        <position position="421"/>
    </location>
    <ligand>
        <name>IMP</name>
        <dbReference type="ChEBI" id="CHEBI:58053"/>
    </ligand>
</feature>
<feature type="binding site" evidence="2">
    <location>
        <position position="475"/>
    </location>
    <ligand>
        <name>K(+)</name>
        <dbReference type="ChEBI" id="CHEBI:29103"/>
        <note>ligand shared between two tetrameric partners</note>
    </ligand>
</feature>
<feature type="binding site" evidence="2">
    <location>
        <position position="476"/>
    </location>
    <ligand>
        <name>K(+)</name>
        <dbReference type="ChEBI" id="CHEBI:29103"/>
        <note>ligand shared between two tetrameric partners</note>
    </ligand>
</feature>
<feature type="binding site" evidence="2">
    <location>
        <position position="477"/>
    </location>
    <ligand>
        <name>K(+)</name>
        <dbReference type="ChEBI" id="CHEBI:29103"/>
        <note>ligand shared between two tetrameric partners</note>
    </ligand>
</feature>
<evidence type="ECO:0000250" key="1"/>
<evidence type="ECO:0000255" key="2">
    <source>
        <dbReference type="HAMAP-Rule" id="MF_01964"/>
    </source>
</evidence>
<name>IMDH_STRP8</name>
<keyword id="KW-0129">CBS domain</keyword>
<keyword id="KW-0332">GMP biosynthesis</keyword>
<keyword id="KW-0479">Metal-binding</keyword>
<keyword id="KW-0520">NAD</keyword>
<keyword id="KW-0560">Oxidoreductase</keyword>
<keyword id="KW-0630">Potassium</keyword>
<keyword id="KW-0658">Purine biosynthesis</keyword>
<keyword id="KW-0677">Repeat</keyword>
<dbReference type="EC" id="1.1.1.205" evidence="2"/>
<dbReference type="EMBL" id="AE009949">
    <property type="protein sequence ID" value="AAL98673.1"/>
    <property type="molecule type" value="Genomic_DNA"/>
</dbReference>
<dbReference type="RefSeq" id="WP_002991454.1">
    <property type="nucleotide sequence ID" value="NC_003485.1"/>
</dbReference>
<dbReference type="SMR" id="P68839"/>
<dbReference type="GeneID" id="69901624"/>
<dbReference type="KEGG" id="spm:spyM18_2244"/>
<dbReference type="HOGENOM" id="CLU_022552_1_0_9"/>
<dbReference type="UniPathway" id="UPA00601">
    <property type="reaction ID" value="UER00295"/>
</dbReference>
<dbReference type="GO" id="GO:0003938">
    <property type="term" value="F:IMP dehydrogenase activity"/>
    <property type="evidence" value="ECO:0007669"/>
    <property type="project" value="UniProtKB-UniRule"/>
</dbReference>
<dbReference type="GO" id="GO:0046872">
    <property type="term" value="F:metal ion binding"/>
    <property type="evidence" value="ECO:0007669"/>
    <property type="project" value="UniProtKB-UniRule"/>
</dbReference>
<dbReference type="GO" id="GO:0000166">
    <property type="term" value="F:nucleotide binding"/>
    <property type="evidence" value="ECO:0007669"/>
    <property type="project" value="UniProtKB-UniRule"/>
</dbReference>
<dbReference type="GO" id="GO:0006177">
    <property type="term" value="P:GMP biosynthetic process"/>
    <property type="evidence" value="ECO:0007669"/>
    <property type="project" value="UniProtKB-UniRule"/>
</dbReference>
<dbReference type="GO" id="GO:0006183">
    <property type="term" value="P:GTP biosynthetic process"/>
    <property type="evidence" value="ECO:0007669"/>
    <property type="project" value="TreeGrafter"/>
</dbReference>
<dbReference type="CDD" id="cd04601">
    <property type="entry name" value="CBS_pair_IMPDH"/>
    <property type="match status" value="1"/>
</dbReference>
<dbReference type="CDD" id="cd00381">
    <property type="entry name" value="IMPDH"/>
    <property type="match status" value="1"/>
</dbReference>
<dbReference type="FunFam" id="3.20.20.70:FF:000003">
    <property type="entry name" value="GMP reductase"/>
    <property type="match status" value="1"/>
</dbReference>
<dbReference type="Gene3D" id="3.20.20.70">
    <property type="entry name" value="Aldolase class I"/>
    <property type="match status" value="1"/>
</dbReference>
<dbReference type="HAMAP" id="MF_01964">
    <property type="entry name" value="IMPDH"/>
    <property type="match status" value="1"/>
</dbReference>
<dbReference type="InterPro" id="IPR013785">
    <property type="entry name" value="Aldolase_TIM"/>
</dbReference>
<dbReference type="InterPro" id="IPR000644">
    <property type="entry name" value="CBS_dom"/>
</dbReference>
<dbReference type="InterPro" id="IPR046342">
    <property type="entry name" value="CBS_dom_sf"/>
</dbReference>
<dbReference type="InterPro" id="IPR005990">
    <property type="entry name" value="IMP_DH"/>
</dbReference>
<dbReference type="InterPro" id="IPR015875">
    <property type="entry name" value="IMP_DH/GMP_Rdtase_CS"/>
</dbReference>
<dbReference type="InterPro" id="IPR001093">
    <property type="entry name" value="IMP_DH_GMPRt"/>
</dbReference>
<dbReference type="NCBIfam" id="TIGR01302">
    <property type="entry name" value="IMP_dehydrog"/>
    <property type="match status" value="1"/>
</dbReference>
<dbReference type="PANTHER" id="PTHR11911:SF111">
    <property type="entry name" value="INOSINE-5'-MONOPHOSPHATE DEHYDROGENASE"/>
    <property type="match status" value="1"/>
</dbReference>
<dbReference type="PANTHER" id="PTHR11911">
    <property type="entry name" value="INOSINE-5-MONOPHOSPHATE DEHYDROGENASE RELATED"/>
    <property type="match status" value="1"/>
</dbReference>
<dbReference type="Pfam" id="PF00571">
    <property type="entry name" value="CBS"/>
    <property type="match status" value="2"/>
</dbReference>
<dbReference type="Pfam" id="PF00478">
    <property type="entry name" value="IMPDH"/>
    <property type="match status" value="1"/>
</dbReference>
<dbReference type="PIRSF" id="PIRSF000130">
    <property type="entry name" value="IMPDH"/>
    <property type="match status" value="1"/>
</dbReference>
<dbReference type="SMART" id="SM00116">
    <property type="entry name" value="CBS"/>
    <property type="match status" value="2"/>
</dbReference>
<dbReference type="SMART" id="SM01240">
    <property type="entry name" value="IMPDH"/>
    <property type="match status" value="1"/>
</dbReference>
<dbReference type="SUPFAM" id="SSF54631">
    <property type="entry name" value="CBS-domain pair"/>
    <property type="match status" value="1"/>
</dbReference>
<dbReference type="SUPFAM" id="SSF51412">
    <property type="entry name" value="Inosine monophosphate dehydrogenase (IMPDH)"/>
    <property type="match status" value="1"/>
</dbReference>
<dbReference type="PROSITE" id="PS51371">
    <property type="entry name" value="CBS"/>
    <property type="match status" value="2"/>
</dbReference>
<dbReference type="PROSITE" id="PS00487">
    <property type="entry name" value="IMP_DH_GMP_RED"/>
    <property type="match status" value="1"/>
</dbReference>
<organism>
    <name type="scientific">Streptococcus pyogenes serotype M18 (strain MGAS8232)</name>
    <dbReference type="NCBI Taxonomy" id="186103"/>
    <lineage>
        <taxon>Bacteria</taxon>
        <taxon>Bacillati</taxon>
        <taxon>Bacillota</taxon>
        <taxon>Bacilli</taxon>
        <taxon>Lactobacillales</taxon>
        <taxon>Streptococcaceae</taxon>
        <taxon>Streptococcus</taxon>
    </lineage>
</organism>